<name>CARA_STRMU</name>
<comment type="function">
    <text evidence="1">Small subunit of the glutamine-dependent carbamoyl phosphate synthetase (CPSase). CPSase catalyzes the formation of carbamoyl phosphate from the ammonia moiety of glutamine, carbonate, and phosphate donated by ATP, constituting the first step of 2 biosynthetic pathways, one leading to arginine and/or urea and the other to pyrimidine nucleotides. The small subunit (glutamine amidotransferase) binds and cleaves glutamine to supply the large subunit with the substrate ammonia.</text>
</comment>
<comment type="catalytic activity">
    <reaction evidence="1">
        <text>hydrogencarbonate + L-glutamine + 2 ATP + H2O = carbamoyl phosphate + L-glutamate + 2 ADP + phosphate + 2 H(+)</text>
        <dbReference type="Rhea" id="RHEA:18633"/>
        <dbReference type="ChEBI" id="CHEBI:15377"/>
        <dbReference type="ChEBI" id="CHEBI:15378"/>
        <dbReference type="ChEBI" id="CHEBI:17544"/>
        <dbReference type="ChEBI" id="CHEBI:29985"/>
        <dbReference type="ChEBI" id="CHEBI:30616"/>
        <dbReference type="ChEBI" id="CHEBI:43474"/>
        <dbReference type="ChEBI" id="CHEBI:58228"/>
        <dbReference type="ChEBI" id="CHEBI:58359"/>
        <dbReference type="ChEBI" id="CHEBI:456216"/>
        <dbReference type="EC" id="6.3.5.5"/>
    </reaction>
</comment>
<comment type="catalytic activity">
    <molecule>Carbamoyl phosphate synthase small chain</molecule>
    <reaction evidence="1">
        <text>L-glutamine + H2O = L-glutamate + NH4(+)</text>
        <dbReference type="Rhea" id="RHEA:15889"/>
        <dbReference type="ChEBI" id="CHEBI:15377"/>
        <dbReference type="ChEBI" id="CHEBI:28938"/>
        <dbReference type="ChEBI" id="CHEBI:29985"/>
        <dbReference type="ChEBI" id="CHEBI:58359"/>
    </reaction>
</comment>
<comment type="pathway">
    <text evidence="1">Amino-acid biosynthesis; L-arginine biosynthesis; carbamoyl phosphate from bicarbonate: step 1/1.</text>
</comment>
<comment type="pathway">
    <text evidence="1">Pyrimidine metabolism; UMP biosynthesis via de novo pathway; (S)-dihydroorotate from bicarbonate: step 1/3.</text>
</comment>
<comment type="subunit">
    <text evidence="1">Composed of two chains; the small (or glutamine) chain promotes the hydrolysis of glutamine to ammonia, which is used by the large (or ammonia) chain to synthesize carbamoyl phosphate. Tetramer of heterodimers (alpha,beta)4.</text>
</comment>
<comment type="similarity">
    <text evidence="1">Belongs to the CarA family.</text>
</comment>
<dbReference type="EC" id="6.3.5.5" evidence="1"/>
<dbReference type="EMBL" id="AE014133">
    <property type="protein sequence ID" value="AAN58575.1"/>
    <property type="molecule type" value="Genomic_DNA"/>
</dbReference>
<dbReference type="RefSeq" id="NP_721269.1">
    <property type="nucleotide sequence ID" value="NC_004350.2"/>
</dbReference>
<dbReference type="RefSeq" id="WP_002262008.1">
    <property type="nucleotide sequence ID" value="NC_004350.2"/>
</dbReference>
<dbReference type="SMR" id="Q8DUP4"/>
<dbReference type="STRING" id="210007.SMU_859"/>
<dbReference type="KEGG" id="smu:SMU_859"/>
<dbReference type="PATRIC" id="fig|210007.7.peg.766"/>
<dbReference type="eggNOG" id="COG0505">
    <property type="taxonomic scope" value="Bacteria"/>
</dbReference>
<dbReference type="HOGENOM" id="CLU_035901_2_1_9"/>
<dbReference type="OrthoDB" id="9804328at2"/>
<dbReference type="PhylomeDB" id="Q8DUP4"/>
<dbReference type="UniPathway" id="UPA00068">
    <property type="reaction ID" value="UER00171"/>
</dbReference>
<dbReference type="UniPathway" id="UPA00070">
    <property type="reaction ID" value="UER00115"/>
</dbReference>
<dbReference type="Proteomes" id="UP000002512">
    <property type="component" value="Chromosome"/>
</dbReference>
<dbReference type="GO" id="GO:0005524">
    <property type="term" value="F:ATP binding"/>
    <property type="evidence" value="ECO:0007669"/>
    <property type="project" value="UniProtKB-UniRule"/>
</dbReference>
<dbReference type="GO" id="GO:0004088">
    <property type="term" value="F:carbamoyl-phosphate synthase (glutamine-hydrolyzing) activity"/>
    <property type="evidence" value="ECO:0007669"/>
    <property type="project" value="UniProtKB-UniRule"/>
</dbReference>
<dbReference type="GO" id="GO:0004359">
    <property type="term" value="F:glutaminase activity"/>
    <property type="evidence" value="ECO:0007669"/>
    <property type="project" value="RHEA"/>
</dbReference>
<dbReference type="GO" id="GO:0006207">
    <property type="term" value="P:'de novo' pyrimidine nucleobase biosynthetic process"/>
    <property type="evidence" value="ECO:0007669"/>
    <property type="project" value="InterPro"/>
</dbReference>
<dbReference type="GO" id="GO:0044205">
    <property type="term" value="P:'de novo' UMP biosynthetic process"/>
    <property type="evidence" value="ECO:0007669"/>
    <property type="project" value="UniProtKB-UniRule"/>
</dbReference>
<dbReference type="GO" id="GO:0006541">
    <property type="term" value="P:glutamine metabolic process"/>
    <property type="evidence" value="ECO:0007669"/>
    <property type="project" value="InterPro"/>
</dbReference>
<dbReference type="GO" id="GO:0006526">
    <property type="term" value="P:L-arginine biosynthetic process"/>
    <property type="evidence" value="ECO:0007669"/>
    <property type="project" value="UniProtKB-UniRule"/>
</dbReference>
<dbReference type="CDD" id="cd01744">
    <property type="entry name" value="GATase1_CPSase"/>
    <property type="match status" value="1"/>
</dbReference>
<dbReference type="FunFam" id="3.40.50.880:FF:000029">
    <property type="entry name" value="Carbamoyl-phosphate synthase small chain"/>
    <property type="match status" value="1"/>
</dbReference>
<dbReference type="FunFam" id="3.50.30.20:FF:000001">
    <property type="entry name" value="Carbamoyl-phosphate synthase small chain"/>
    <property type="match status" value="1"/>
</dbReference>
<dbReference type="Gene3D" id="3.40.50.880">
    <property type="match status" value="1"/>
</dbReference>
<dbReference type="Gene3D" id="3.50.30.20">
    <property type="entry name" value="Carbamoyl-phosphate synthase small subunit, N-terminal domain"/>
    <property type="match status" value="1"/>
</dbReference>
<dbReference type="HAMAP" id="MF_01209">
    <property type="entry name" value="CPSase_S_chain"/>
    <property type="match status" value="1"/>
</dbReference>
<dbReference type="InterPro" id="IPR050472">
    <property type="entry name" value="Anth_synth/Amidotransfase"/>
</dbReference>
<dbReference type="InterPro" id="IPR006274">
    <property type="entry name" value="CarbamoylP_synth_ssu"/>
</dbReference>
<dbReference type="InterPro" id="IPR002474">
    <property type="entry name" value="CarbamoylP_synth_ssu_N"/>
</dbReference>
<dbReference type="InterPro" id="IPR036480">
    <property type="entry name" value="CarbP_synth_ssu_N_sf"/>
</dbReference>
<dbReference type="InterPro" id="IPR029062">
    <property type="entry name" value="Class_I_gatase-like"/>
</dbReference>
<dbReference type="InterPro" id="IPR035686">
    <property type="entry name" value="CPSase_GATase1"/>
</dbReference>
<dbReference type="InterPro" id="IPR017926">
    <property type="entry name" value="GATASE"/>
</dbReference>
<dbReference type="NCBIfam" id="TIGR01368">
    <property type="entry name" value="CPSaseIIsmall"/>
    <property type="match status" value="1"/>
</dbReference>
<dbReference type="NCBIfam" id="NF009475">
    <property type="entry name" value="PRK12838.1"/>
    <property type="match status" value="1"/>
</dbReference>
<dbReference type="PANTHER" id="PTHR43418:SF7">
    <property type="entry name" value="CARBAMOYL-PHOSPHATE SYNTHASE SMALL CHAIN"/>
    <property type="match status" value="1"/>
</dbReference>
<dbReference type="PANTHER" id="PTHR43418">
    <property type="entry name" value="MULTIFUNCTIONAL TRYPTOPHAN BIOSYNTHESIS PROTEIN-RELATED"/>
    <property type="match status" value="1"/>
</dbReference>
<dbReference type="Pfam" id="PF00988">
    <property type="entry name" value="CPSase_sm_chain"/>
    <property type="match status" value="1"/>
</dbReference>
<dbReference type="Pfam" id="PF00117">
    <property type="entry name" value="GATase"/>
    <property type="match status" value="1"/>
</dbReference>
<dbReference type="PRINTS" id="PR00097">
    <property type="entry name" value="ANTSNTHASEII"/>
</dbReference>
<dbReference type="PRINTS" id="PR00099">
    <property type="entry name" value="CPSGATASE"/>
</dbReference>
<dbReference type="PRINTS" id="PR00096">
    <property type="entry name" value="GATASE"/>
</dbReference>
<dbReference type="SMART" id="SM01097">
    <property type="entry name" value="CPSase_sm_chain"/>
    <property type="match status" value="1"/>
</dbReference>
<dbReference type="SUPFAM" id="SSF52021">
    <property type="entry name" value="Carbamoyl phosphate synthetase, small subunit N-terminal domain"/>
    <property type="match status" value="1"/>
</dbReference>
<dbReference type="SUPFAM" id="SSF52317">
    <property type="entry name" value="Class I glutamine amidotransferase-like"/>
    <property type="match status" value="1"/>
</dbReference>
<dbReference type="PROSITE" id="PS51273">
    <property type="entry name" value="GATASE_TYPE_1"/>
    <property type="match status" value="1"/>
</dbReference>
<accession>Q8DUP4</accession>
<protein>
    <recommendedName>
        <fullName evidence="1">Carbamoyl phosphate synthase small chain</fullName>
        <ecNumber evidence="1">6.3.5.5</ecNumber>
    </recommendedName>
    <alternativeName>
        <fullName evidence="1">Carbamoyl phosphate synthetase glutamine chain</fullName>
    </alternativeName>
</protein>
<proteinExistence type="inferred from homology"/>
<gene>
    <name evidence="1" type="primary">carA</name>
    <name type="synonym">pyrAA</name>
    <name type="ordered locus">SMU_859</name>
</gene>
<reference key="1">
    <citation type="journal article" date="2002" name="Proc. Natl. Acad. Sci. U.S.A.">
        <title>Genome sequence of Streptococcus mutans UA159, a cariogenic dental pathogen.</title>
        <authorList>
            <person name="Ajdic D.J."/>
            <person name="McShan W.M."/>
            <person name="McLaughlin R.E."/>
            <person name="Savic G."/>
            <person name="Chang J."/>
            <person name="Carson M.B."/>
            <person name="Primeaux C."/>
            <person name="Tian R."/>
            <person name="Kenton S."/>
            <person name="Jia H.G."/>
            <person name="Lin S.P."/>
            <person name="Qian Y."/>
            <person name="Li S."/>
            <person name="Zhu H."/>
            <person name="Najar F.Z."/>
            <person name="Lai H."/>
            <person name="White J."/>
            <person name="Roe B.A."/>
            <person name="Ferretti J.J."/>
        </authorList>
    </citation>
    <scope>NUCLEOTIDE SEQUENCE [LARGE SCALE GENOMIC DNA]</scope>
    <source>
        <strain>ATCC 700610 / UA159</strain>
    </source>
</reference>
<keyword id="KW-0028">Amino-acid biosynthesis</keyword>
<keyword id="KW-0055">Arginine biosynthesis</keyword>
<keyword id="KW-0067">ATP-binding</keyword>
<keyword id="KW-0315">Glutamine amidotransferase</keyword>
<keyword id="KW-0436">Ligase</keyword>
<keyword id="KW-0547">Nucleotide-binding</keyword>
<keyword id="KW-0665">Pyrimidine biosynthesis</keyword>
<keyword id="KW-1185">Reference proteome</keyword>
<organism>
    <name type="scientific">Streptococcus mutans serotype c (strain ATCC 700610 / UA159)</name>
    <dbReference type="NCBI Taxonomy" id="210007"/>
    <lineage>
        <taxon>Bacteria</taxon>
        <taxon>Bacillati</taxon>
        <taxon>Bacillota</taxon>
        <taxon>Bacilli</taxon>
        <taxon>Lactobacillales</taxon>
        <taxon>Streptococcaceae</taxon>
        <taxon>Streptococcus</taxon>
    </lineage>
</organism>
<feature type="chain" id="PRO_0000112329" description="Carbamoyl phosphate synthase small chain">
    <location>
        <begin position="1"/>
        <end position="362"/>
    </location>
</feature>
<feature type="domain" description="Glutamine amidotransferase type-1" evidence="1">
    <location>
        <begin position="172"/>
        <end position="358"/>
    </location>
</feature>
<feature type="region of interest" description="CPSase" evidence="1">
    <location>
        <begin position="1"/>
        <end position="169"/>
    </location>
</feature>
<feature type="active site" description="Nucleophile" evidence="1">
    <location>
        <position position="247"/>
    </location>
</feature>
<feature type="active site" evidence="1">
    <location>
        <position position="331"/>
    </location>
</feature>
<feature type="active site" evidence="1">
    <location>
        <position position="333"/>
    </location>
</feature>
<feature type="binding site" evidence="1">
    <location>
        <position position="46"/>
    </location>
    <ligand>
        <name>L-glutamine</name>
        <dbReference type="ChEBI" id="CHEBI:58359"/>
    </ligand>
</feature>
<feature type="binding site" evidence="1">
    <location>
        <position position="220"/>
    </location>
    <ligand>
        <name>L-glutamine</name>
        <dbReference type="ChEBI" id="CHEBI:58359"/>
    </ligand>
</feature>
<feature type="binding site" evidence="1">
    <location>
        <position position="222"/>
    </location>
    <ligand>
        <name>L-glutamine</name>
        <dbReference type="ChEBI" id="CHEBI:58359"/>
    </ligand>
</feature>
<feature type="binding site" evidence="1">
    <location>
        <position position="248"/>
    </location>
    <ligand>
        <name>L-glutamine</name>
        <dbReference type="ChEBI" id="CHEBI:58359"/>
    </ligand>
</feature>
<feature type="binding site" evidence="1">
    <location>
        <position position="251"/>
    </location>
    <ligand>
        <name>L-glutamine</name>
        <dbReference type="ChEBI" id="CHEBI:58359"/>
    </ligand>
</feature>
<feature type="binding site" evidence="1">
    <location>
        <position position="289"/>
    </location>
    <ligand>
        <name>L-glutamine</name>
        <dbReference type="ChEBI" id="CHEBI:58359"/>
    </ligand>
</feature>
<feature type="binding site" evidence="1">
    <location>
        <position position="291"/>
    </location>
    <ligand>
        <name>L-glutamine</name>
        <dbReference type="ChEBI" id="CHEBI:58359"/>
    </ligand>
</feature>
<feature type="binding site" evidence="1">
    <location>
        <position position="292"/>
    </location>
    <ligand>
        <name>L-glutamine</name>
        <dbReference type="ChEBI" id="CHEBI:58359"/>
    </ligand>
</feature>
<sequence>MGKRLLILEDGTIFEGQAFGADLDVTGEIVFNTGMTGYQESITDQSYNGQILTFTYPLVGNYGINRDDYESIKPTCKGVVVSENARRANNWRKQMTLDEFLKSKNIPGISGIDTRALTKIIRHHGTMKATLANEGDSIEHLQDQLRATVLPTNNIEQVSTKTAYPAPGVGKNIVLVDFGLKHSILREFSKRNCNVTVVPYNTTAQEILNLNPDGIMLSNGPGNPQDVPEALEMIRGVQGKIPIFGICMGHQLFSLANGASTYKMKFGHRGFNHAVREIATGRIDFTSQNHGYAVSRDNLPEELIITHEEINDKSIEGVRHRYYPAFSVQYHPDAAPGPHDASYLFDEFLELIDAFQLEKASK</sequence>
<evidence type="ECO:0000255" key="1">
    <source>
        <dbReference type="HAMAP-Rule" id="MF_01209"/>
    </source>
</evidence>